<accession>A0M7D9</accession>
<evidence type="ECO:0000255" key="1">
    <source>
        <dbReference type="HAMAP-Rule" id="MF_00600"/>
    </source>
</evidence>
<evidence type="ECO:0000256" key="2">
    <source>
        <dbReference type="SAM" id="MobiDB-lite"/>
    </source>
</evidence>
<reference key="1">
    <citation type="journal article" date="2006" name="Environ. Microbiol.">
        <title>Whole genome analysis of the marine Bacteroidetes'Gramella forsetii' reveals adaptations to degradation of polymeric organic matter.</title>
        <authorList>
            <person name="Bauer M."/>
            <person name="Kube M."/>
            <person name="Teeling H."/>
            <person name="Richter M."/>
            <person name="Lombardot T."/>
            <person name="Allers E."/>
            <person name="Wuerdemann C.A."/>
            <person name="Quast C."/>
            <person name="Kuhl H."/>
            <person name="Knaust F."/>
            <person name="Woebken D."/>
            <person name="Bischof K."/>
            <person name="Mussmann M."/>
            <person name="Choudhuri J.V."/>
            <person name="Meyer F."/>
            <person name="Reinhardt R."/>
            <person name="Amann R.I."/>
            <person name="Gloeckner F.O."/>
        </authorList>
    </citation>
    <scope>NUCLEOTIDE SEQUENCE [LARGE SCALE GENOMIC DNA]</scope>
    <source>
        <strain>DSM 17595 / CGMCC 1.15422 / KT0803</strain>
    </source>
</reference>
<gene>
    <name evidence="1" type="primary">groEL</name>
    <name evidence="1" type="synonym">groL</name>
    <name type="ordered locus">GFO_3596</name>
</gene>
<protein>
    <recommendedName>
        <fullName evidence="1">Chaperonin GroEL</fullName>
        <ecNumber evidence="1">5.6.1.7</ecNumber>
    </recommendedName>
    <alternativeName>
        <fullName evidence="1">60 kDa chaperonin</fullName>
    </alternativeName>
    <alternativeName>
        <fullName evidence="1">Chaperonin-60</fullName>
        <shortName evidence="1">Cpn60</shortName>
    </alternativeName>
</protein>
<keyword id="KW-0067">ATP-binding</keyword>
<keyword id="KW-0143">Chaperone</keyword>
<keyword id="KW-0963">Cytoplasm</keyword>
<keyword id="KW-0413">Isomerase</keyword>
<keyword id="KW-0547">Nucleotide-binding</keyword>
<sequence>MAKDIKFDIQARNGIKRGVDALANAVKVTLGPKGRNVIISKSFGAPTVTKDGVTVAKEIELEDPLENMGAQMVKEVASKTNDLAGDGTTTATVLAQAIVQEGLKNVAAGANPMDLKRGIDKAVEALTADLAKQTKEVGDSSEKIKQVASISANNDDMIGDLIAQAFGKVGKEGVITVEEAKGTETHVDVVEGMQFDRGYLSPYFVTNSEKMTADLEDPYILLFDKKISSMKDLLPVLEPVAQSGKPLLIIAEDVDGEALATLVVNKLRGSLKIAAVKAPGFGDRRKAMLEDIAILTGGTVISEERGFSLENATIDMLGTAEKVAIDKDNTTVVNGAGDDKAIKERVNQIKAQIESTTSDYDREKLQERLAKLAGGVAVLYVGAASEVEMKEKKDRVDDALHATRAAVEEGIVAGGGVALIRAQVVLSKIKTENPDEATGVKIVSKAIESPLRTIVENAGGEGSVVINKVLEGKKDFGYDAKTETYVDMLKAGIIDPKKVTRVALENAASVAGMILTTECALTDIPEDNAGGGGMPQGMGGGMPGMM</sequence>
<proteinExistence type="inferred from homology"/>
<comment type="function">
    <text evidence="1">Together with its co-chaperonin GroES, plays an essential role in assisting protein folding. The GroEL-GroES system forms a nano-cage that allows encapsulation of the non-native substrate proteins and provides a physical environment optimized to promote and accelerate protein folding.</text>
</comment>
<comment type="catalytic activity">
    <reaction evidence="1">
        <text>ATP + H2O + a folded polypeptide = ADP + phosphate + an unfolded polypeptide.</text>
        <dbReference type="EC" id="5.6.1.7"/>
    </reaction>
</comment>
<comment type="subunit">
    <text evidence="1">Forms a cylinder of 14 subunits composed of two heptameric rings stacked back-to-back. Interacts with the co-chaperonin GroES.</text>
</comment>
<comment type="subcellular location">
    <subcellularLocation>
        <location evidence="1">Cytoplasm</location>
    </subcellularLocation>
</comment>
<comment type="similarity">
    <text evidence="1">Belongs to the chaperonin (HSP60) family.</text>
</comment>
<name>CH60_CHRFK</name>
<feature type="chain" id="PRO_1000025787" description="Chaperonin GroEL">
    <location>
        <begin position="1"/>
        <end position="546"/>
    </location>
</feature>
<feature type="region of interest" description="Disordered" evidence="2">
    <location>
        <begin position="526"/>
        <end position="546"/>
    </location>
</feature>
<feature type="compositionally biased region" description="Gly residues" evidence="2">
    <location>
        <begin position="529"/>
        <end position="546"/>
    </location>
</feature>
<feature type="binding site" evidence="1">
    <location>
        <begin position="29"/>
        <end position="32"/>
    </location>
    <ligand>
        <name>ATP</name>
        <dbReference type="ChEBI" id="CHEBI:30616"/>
    </ligand>
</feature>
<feature type="binding site" evidence="1">
    <location>
        <position position="50"/>
    </location>
    <ligand>
        <name>ATP</name>
        <dbReference type="ChEBI" id="CHEBI:30616"/>
    </ligand>
</feature>
<feature type="binding site" evidence="1">
    <location>
        <begin position="86"/>
        <end position="90"/>
    </location>
    <ligand>
        <name>ATP</name>
        <dbReference type="ChEBI" id="CHEBI:30616"/>
    </ligand>
</feature>
<feature type="binding site" evidence="1">
    <location>
        <position position="415"/>
    </location>
    <ligand>
        <name>ATP</name>
        <dbReference type="ChEBI" id="CHEBI:30616"/>
    </ligand>
</feature>
<feature type="binding site" evidence="1">
    <location>
        <position position="495"/>
    </location>
    <ligand>
        <name>ATP</name>
        <dbReference type="ChEBI" id="CHEBI:30616"/>
    </ligand>
</feature>
<dbReference type="EC" id="5.6.1.7" evidence="1"/>
<dbReference type="EMBL" id="CU207366">
    <property type="protein sequence ID" value="CAL68534.1"/>
    <property type="molecule type" value="Genomic_DNA"/>
</dbReference>
<dbReference type="RefSeq" id="WP_011711435.1">
    <property type="nucleotide sequence ID" value="NC_008571.1"/>
</dbReference>
<dbReference type="SMR" id="A0M7D9"/>
<dbReference type="STRING" id="411154.GFO_3596"/>
<dbReference type="KEGG" id="gfo:GFO_3596"/>
<dbReference type="eggNOG" id="COG0459">
    <property type="taxonomic scope" value="Bacteria"/>
</dbReference>
<dbReference type="HOGENOM" id="CLU_016503_3_0_10"/>
<dbReference type="OrthoDB" id="9766614at2"/>
<dbReference type="Proteomes" id="UP000000755">
    <property type="component" value="Chromosome"/>
</dbReference>
<dbReference type="GO" id="GO:0005737">
    <property type="term" value="C:cytoplasm"/>
    <property type="evidence" value="ECO:0007669"/>
    <property type="project" value="UniProtKB-SubCell"/>
</dbReference>
<dbReference type="GO" id="GO:0005524">
    <property type="term" value="F:ATP binding"/>
    <property type="evidence" value="ECO:0007669"/>
    <property type="project" value="UniProtKB-UniRule"/>
</dbReference>
<dbReference type="GO" id="GO:0140662">
    <property type="term" value="F:ATP-dependent protein folding chaperone"/>
    <property type="evidence" value="ECO:0007669"/>
    <property type="project" value="InterPro"/>
</dbReference>
<dbReference type="GO" id="GO:0016853">
    <property type="term" value="F:isomerase activity"/>
    <property type="evidence" value="ECO:0007669"/>
    <property type="project" value="UniProtKB-KW"/>
</dbReference>
<dbReference type="GO" id="GO:0051082">
    <property type="term" value="F:unfolded protein binding"/>
    <property type="evidence" value="ECO:0007669"/>
    <property type="project" value="UniProtKB-UniRule"/>
</dbReference>
<dbReference type="GO" id="GO:0042026">
    <property type="term" value="P:protein refolding"/>
    <property type="evidence" value="ECO:0007669"/>
    <property type="project" value="UniProtKB-UniRule"/>
</dbReference>
<dbReference type="CDD" id="cd03344">
    <property type="entry name" value="GroEL"/>
    <property type="match status" value="1"/>
</dbReference>
<dbReference type="FunFam" id="1.10.560.10:FF:000001">
    <property type="entry name" value="60 kDa chaperonin"/>
    <property type="match status" value="1"/>
</dbReference>
<dbReference type="FunFam" id="3.50.7.10:FF:000001">
    <property type="entry name" value="60 kDa chaperonin"/>
    <property type="match status" value="1"/>
</dbReference>
<dbReference type="Gene3D" id="3.50.7.10">
    <property type="entry name" value="GroEL"/>
    <property type="match status" value="1"/>
</dbReference>
<dbReference type="Gene3D" id="1.10.560.10">
    <property type="entry name" value="GroEL-like equatorial domain"/>
    <property type="match status" value="1"/>
</dbReference>
<dbReference type="Gene3D" id="3.30.260.10">
    <property type="entry name" value="TCP-1-like chaperonin intermediate domain"/>
    <property type="match status" value="1"/>
</dbReference>
<dbReference type="HAMAP" id="MF_00600">
    <property type="entry name" value="CH60"/>
    <property type="match status" value="1"/>
</dbReference>
<dbReference type="InterPro" id="IPR018370">
    <property type="entry name" value="Chaperonin_Cpn60_CS"/>
</dbReference>
<dbReference type="InterPro" id="IPR001844">
    <property type="entry name" value="Cpn60/GroEL"/>
</dbReference>
<dbReference type="InterPro" id="IPR002423">
    <property type="entry name" value="Cpn60/GroEL/TCP-1"/>
</dbReference>
<dbReference type="InterPro" id="IPR027409">
    <property type="entry name" value="GroEL-like_apical_dom_sf"/>
</dbReference>
<dbReference type="InterPro" id="IPR027413">
    <property type="entry name" value="GROEL-like_equatorial_sf"/>
</dbReference>
<dbReference type="InterPro" id="IPR027410">
    <property type="entry name" value="TCP-1-like_intermed_sf"/>
</dbReference>
<dbReference type="NCBIfam" id="TIGR02348">
    <property type="entry name" value="GroEL"/>
    <property type="match status" value="1"/>
</dbReference>
<dbReference type="NCBIfam" id="NF000592">
    <property type="entry name" value="PRK00013.1"/>
    <property type="match status" value="1"/>
</dbReference>
<dbReference type="NCBIfam" id="NF009487">
    <property type="entry name" value="PRK12849.1"/>
    <property type="match status" value="1"/>
</dbReference>
<dbReference type="NCBIfam" id="NF009488">
    <property type="entry name" value="PRK12850.1"/>
    <property type="match status" value="1"/>
</dbReference>
<dbReference type="NCBIfam" id="NF009489">
    <property type="entry name" value="PRK12851.1"/>
    <property type="match status" value="1"/>
</dbReference>
<dbReference type="PANTHER" id="PTHR45633">
    <property type="entry name" value="60 KDA HEAT SHOCK PROTEIN, MITOCHONDRIAL"/>
    <property type="match status" value="1"/>
</dbReference>
<dbReference type="Pfam" id="PF00118">
    <property type="entry name" value="Cpn60_TCP1"/>
    <property type="match status" value="1"/>
</dbReference>
<dbReference type="PRINTS" id="PR00298">
    <property type="entry name" value="CHAPERONIN60"/>
</dbReference>
<dbReference type="SUPFAM" id="SSF52029">
    <property type="entry name" value="GroEL apical domain-like"/>
    <property type="match status" value="1"/>
</dbReference>
<dbReference type="SUPFAM" id="SSF48592">
    <property type="entry name" value="GroEL equatorial domain-like"/>
    <property type="match status" value="1"/>
</dbReference>
<dbReference type="SUPFAM" id="SSF54849">
    <property type="entry name" value="GroEL-intermediate domain like"/>
    <property type="match status" value="1"/>
</dbReference>
<dbReference type="PROSITE" id="PS00296">
    <property type="entry name" value="CHAPERONINS_CPN60"/>
    <property type="match status" value="1"/>
</dbReference>
<organism>
    <name type="scientific">Christiangramia forsetii (strain DSM 17595 / CGMCC 1.15422 / KT0803)</name>
    <name type="common">Gramella forsetii</name>
    <dbReference type="NCBI Taxonomy" id="411154"/>
    <lineage>
        <taxon>Bacteria</taxon>
        <taxon>Pseudomonadati</taxon>
        <taxon>Bacteroidota</taxon>
        <taxon>Flavobacteriia</taxon>
        <taxon>Flavobacteriales</taxon>
        <taxon>Flavobacteriaceae</taxon>
        <taxon>Christiangramia</taxon>
    </lineage>
</organism>